<gene>
    <name type="primary">Repin1</name>
</gene>
<name>REPI1_RAT</name>
<feature type="chain" id="PRO_0000274914" description="DNA-binding protein REPIN1">
    <location>
        <begin position="1"/>
        <end position="548"/>
    </location>
</feature>
<feature type="zinc finger region" description="C2H2-type 1; atypical" evidence="3">
    <location>
        <begin position="53"/>
        <end position="75"/>
    </location>
</feature>
<feature type="zinc finger region" description="C2H2-type 2" evidence="3">
    <location>
        <begin position="81"/>
        <end position="103"/>
    </location>
</feature>
<feature type="zinc finger region" description="C2H2-type 3" evidence="3">
    <location>
        <begin position="112"/>
        <end position="134"/>
    </location>
</feature>
<feature type="zinc finger region" description="C2H2-type 4; atypical" evidence="3">
    <location>
        <begin position="141"/>
        <end position="163"/>
    </location>
</feature>
<feature type="zinc finger region" description="C2H2-type 5" evidence="3">
    <location>
        <begin position="173"/>
        <end position="195"/>
    </location>
</feature>
<feature type="zinc finger region" description="C2H2-type 6" evidence="3">
    <location>
        <begin position="232"/>
        <end position="254"/>
    </location>
</feature>
<feature type="zinc finger region" description="C2H2-type 7" evidence="3">
    <location>
        <begin position="260"/>
        <end position="282"/>
    </location>
</feature>
<feature type="zinc finger region" description="C2H2-type 8" evidence="3">
    <location>
        <begin position="288"/>
        <end position="310"/>
    </location>
</feature>
<feature type="zinc finger region" description="C2H2-type 9" evidence="3">
    <location>
        <begin position="356"/>
        <end position="378"/>
    </location>
</feature>
<feature type="zinc finger region" description="C2H2-type 10" evidence="3">
    <location>
        <begin position="384"/>
        <end position="406"/>
    </location>
</feature>
<feature type="zinc finger region" description="C2H2-type 11" evidence="3">
    <location>
        <begin position="412"/>
        <end position="434"/>
    </location>
</feature>
<feature type="zinc finger region" description="C2H2-type 12" evidence="3">
    <location>
        <begin position="440"/>
        <end position="462"/>
    </location>
</feature>
<feature type="zinc finger region" description="C2H2-type 13" evidence="3">
    <location>
        <begin position="468"/>
        <end position="490"/>
    </location>
</feature>
<feature type="zinc finger region" description="C2H2-type 14" evidence="3">
    <location>
        <begin position="496"/>
        <end position="518"/>
    </location>
</feature>
<feature type="zinc finger region" description="C2H2-type 15" evidence="3">
    <location>
        <begin position="524"/>
        <end position="546"/>
    </location>
</feature>
<feature type="region of interest" description="Disordered" evidence="4">
    <location>
        <begin position="1"/>
        <end position="47"/>
    </location>
</feature>
<feature type="compositionally biased region" description="Polar residues" evidence="4">
    <location>
        <begin position="22"/>
        <end position="31"/>
    </location>
</feature>
<feature type="modified residue" description="Phosphoserine" evidence="2">
    <location>
        <position position="27"/>
    </location>
</feature>
<feature type="modified residue" description="N6-acetyllysine" evidence="1">
    <location>
        <position position="39"/>
    </location>
</feature>
<feature type="modified residue" description="N6-acetyllysine" evidence="2">
    <location>
        <position position="272"/>
    </location>
</feature>
<accession>Q68H95</accession>
<reference key="1">
    <citation type="submission" date="2004-07" db="EMBL/GenBank/DDBJ databases">
        <authorList>
            <person name="Kloting N."/>
            <person name="Kloting I."/>
        </authorList>
    </citation>
    <scope>NUCLEOTIDE SEQUENCE [MRNA]</scope>
    <source>
        <strain>BB/OK</strain>
    </source>
</reference>
<reference key="2">
    <citation type="journal article" date="2007" name="Diabetes Metab. Res. Rev.">
        <title>Triplet repeat in the Repin1 3'-untranslated region on rat chromosome 4 correlates with facets of the metabolic syndrome.</title>
        <authorList>
            <person name="Kloeting N."/>
            <person name="Wilke B."/>
            <person name="Kloeting I."/>
        </authorList>
    </citation>
    <scope>TISSUE SPECIFICITY</scope>
</reference>
<evidence type="ECO:0000250" key="1">
    <source>
        <dbReference type="UniProtKB" id="Q5U4E2"/>
    </source>
</evidence>
<evidence type="ECO:0000250" key="2">
    <source>
        <dbReference type="UniProtKB" id="Q9BWE0"/>
    </source>
</evidence>
<evidence type="ECO:0000255" key="3">
    <source>
        <dbReference type="PROSITE-ProRule" id="PRU00042"/>
    </source>
</evidence>
<evidence type="ECO:0000256" key="4">
    <source>
        <dbReference type="SAM" id="MobiDB-lite"/>
    </source>
</evidence>
<evidence type="ECO:0000269" key="5">
    <source>
    </source>
</evidence>
<evidence type="ECO:0000305" key="6"/>
<sequence>MLERRCRGPTAMGPAHPWLFSGPSQESSQPNRGLRYQGKSVAQPGGPAPVKVHRCAHCRKRFPGWVALWLHTRRCQARLPLPCHECNQRFRHAPFLALHLQVHASAVPDLGFICHLCGHSFRGWVALVLHLRAHSASKRPITCPECNKRFWRQKQLRAHLRRCQPPAPEARPFICGNCGRSFAQWDQLVVHKRVHVAEALEEAAAKALGPRPRGRPSVTAPRPGGDAVDRPFQCACCGKRFRHKPNLIAHRRVHTGERPHQCPECGKRFTNKPYLTSHRRIHTGEKPYPCTECGRRFRHKPNLLSHSKIHKRSEVSAQAASHTGSHLIAAEPMAQPALGVPLGSLRTPAEAPASLHSCTDCGRSFRLERFLRLHQRQHTGERPFTCTECGKNFGKKTHLVAHSRVHSGERPFACEECGRRFSQGSHLAAHRRDHAPERPFVCPDCGKAFRHKPYLAAHRRIHTGEKPYVCPDCGKAFSQKSNLVSHRRIHTGERPYACPDCDRSFSQKSNLITHRKSHIRDGAFCCAICGQTFDDEDRLLMHQKKHDA</sequence>
<keyword id="KW-0007">Acetylation</keyword>
<keyword id="KW-0963">Cytoplasm</keyword>
<keyword id="KW-0238">DNA-binding</keyword>
<keyword id="KW-0479">Metal-binding</keyword>
<keyword id="KW-0539">Nucleus</keyword>
<keyword id="KW-0597">Phosphoprotein</keyword>
<keyword id="KW-1185">Reference proteome</keyword>
<keyword id="KW-0677">Repeat</keyword>
<keyword id="KW-0862">Zinc</keyword>
<keyword id="KW-0863">Zinc-finger</keyword>
<dbReference type="EMBL" id="AY691175">
    <property type="protein sequence ID" value="AAT99579.1"/>
    <property type="molecule type" value="mRNA"/>
</dbReference>
<dbReference type="RefSeq" id="NP_001005893.1">
    <property type="nucleotide sequence ID" value="NM_001005893.4"/>
</dbReference>
<dbReference type="RefSeq" id="XP_006236490.1">
    <property type="nucleotide sequence ID" value="XM_006236428.5"/>
</dbReference>
<dbReference type="RefSeq" id="XP_006236491.1">
    <property type="nucleotide sequence ID" value="XM_006236429.3"/>
</dbReference>
<dbReference type="SMR" id="Q68H95"/>
<dbReference type="FunCoup" id="Q68H95">
    <property type="interactions" value="25"/>
</dbReference>
<dbReference type="STRING" id="10116.ENSRNOP00000011032"/>
<dbReference type="PhosphoSitePlus" id="Q68H95"/>
<dbReference type="PaxDb" id="10116-ENSRNOP00000011032"/>
<dbReference type="Ensembl" id="ENSRNOT00000117289.1">
    <property type="protein sequence ID" value="ENSRNOP00000088288.1"/>
    <property type="gene ID" value="ENSRNOG00000008239.5"/>
</dbReference>
<dbReference type="GeneID" id="445541"/>
<dbReference type="KEGG" id="rno:445541"/>
<dbReference type="UCSC" id="RGD:1549707">
    <property type="organism name" value="rat"/>
</dbReference>
<dbReference type="AGR" id="RGD:1549707"/>
<dbReference type="CTD" id="29803"/>
<dbReference type="RGD" id="1549707">
    <property type="gene designation" value="Repin1"/>
</dbReference>
<dbReference type="eggNOG" id="KOG1721">
    <property type="taxonomic scope" value="Eukaryota"/>
</dbReference>
<dbReference type="GeneTree" id="ENSGT00940000162588"/>
<dbReference type="HOGENOM" id="CLU_002678_36_0_1"/>
<dbReference type="InParanoid" id="Q68H95"/>
<dbReference type="OMA" id="CVHCRRH"/>
<dbReference type="PhylomeDB" id="Q68H95"/>
<dbReference type="TreeFam" id="TF326846"/>
<dbReference type="PRO" id="PR:Q68H95"/>
<dbReference type="Proteomes" id="UP000002494">
    <property type="component" value="Chromosome 4"/>
</dbReference>
<dbReference type="GO" id="GO:0005694">
    <property type="term" value="C:chromosome"/>
    <property type="evidence" value="ECO:0000318"/>
    <property type="project" value="GO_Central"/>
</dbReference>
<dbReference type="GO" id="GO:0005829">
    <property type="term" value="C:cytosol"/>
    <property type="evidence" value="ECO:0000250"/>
    <property type="project" value="UniProtKB"/>
</dbReference>
<dbReference type="GO" id="GO:0022626">
    <property type="term" value="C:cytosolic ribosome"/>
    <property type="evidence" value="ECO:0000266"/>
    <property type="project" value="RGD"/>
</dbReference>
<dbReference type="GO" id="GO:0005811">
    <property type="term" value="C:lipid droplet"/>
    <property type="evidence" value="ECO:0000266"/>
    <property type="project" value="RGD"/>
</dbReference>
<dbReference type="GO" id="GO:0031965">
    <property type="term" value="C:nuclear membrane"/>
    <property type="evidence" value="ECO:0000250"/>
    <property type="project" value="UniProtKB"/>
</dbReference>
<dbReference type="GO" id="GO:0005654">
    <property type="term" value="C:nucleoplasm"/>
    <property type="evidence" value="ECO:0007669"/>
    <property type="project" value="Ensembl"/>
</dbReference>
<dbReference type="GO" id="GO:0043035">
    <property type="term" value="F:chromatin insulator sequence binding"/>
    <property type="evidence" value="ECO:0000318"/>
    <property type="project" value="GO_Central"/>
</dbReference>
<dbReference type="GO" id="GO:0043565">
    <property type="term" value="F:sequence-specific DNA binding"/>
    <property type="evidence" value="ECO:0000250"/>
    <property type="project" value="UniProtKB"/>
</dbReference>
<dbReference type="GO" id="GO:0008270">
    <property type="term" value="F:zinc ion binding"/>
    <property type="evidence" value="ECO:0007669"/>
    <property type="project" value="UniProtKB-KW"/>
</dbReference>
<dbReference type="GO" id="GO:0046326">
    <property type="term" value="P:positive regulation of D-glucose import"/>
    <property type="evidence" value="ECO:0000266"/>
    <property type="project" value="RGD"/>
</dbReference>
<dbReference type="GO" id="GO:2000191">
    <property type="term" value="P:regulation of fatty acid transport"/>
    <property type="evidence" value="ECO:0000250"/>
    <property type="project" value="UniProtKB"/>
</dbReference>
<dbReference type="GO" id="GO:0006357">
    <property type="term" value="P:regulation of transcription by RNA polymerase II"/>
    <property type="evidence" value="ECO:0000250"/>
    <property type="project" value="UniProtKB"/>
</dbReference>
<dbReference type="FunFam" id="3.30.160.60:FF:000214">
    <property type="entry name" value="replication initiator 1 isoform X1"/>
    <property type="match status" value="4"/>
</dbReference>
<dbReference type="FunFam" id="3.30.160.60:FF:000823">
    <property type="entry name" value="replication initiator 1 isoform X1"/>
    <property type="match status" value="1"/>
</dbReference>
<dbReference type="FunFam" id="3.30.160.60:FF:001048">
    <property type="entry name" value="replication initiator 1 isoform X1"/>
    <property type="match status" value="1"/>
</dbReference>
<dbReference type="FunFam" id="3.30.160.60:FF:001367">
    <property type="entry name" value="replication initiator 1 isoform X1"/>
    <property type="match status" value="1"/>
</dbReference>
<dbReference type="FunFam" id="3.30.160.60:FF:001422">
    <property type="entry name" value="replication initiator 1 isoform X1"/>
    <property type="match status" value="1"/>
</dbReference>
<dbReference type="FunFam" id="3.30.160.60:FF:000750">
    <property type="entry name" value="replication initiator 1 isoform X2"/>
    <property type="match status" value="1"/>
</dbReference>
<dbReference type="FunFam" id="3.30.160.60:FF:000269">
    <property type="entry name" value="Zinc finger protein 287"/>
    <property type="match status" value="1"/>
</dbReference>
<dbReference type="Gene3D" id="3.30.160.60">
    <property type="entry name" value="Classic Zinc Finger"/>
    <property type="match status" value="12"/>
</dbReference>
<dbReference type="InterPro" id="IPR036236">
    <property type="entry name" value="Znf_C2H2_sf"/>
</dbReference>
<dbReference type="InterPro" id="IPR013087">
    <property type="entry name" value="Znf_C2H2_type"/>
</dbReference>
<dbReference type="PANTHER" id="PTHR24376:SF243">
    <property type="entry name" value="C2H2-TYPE DOMAIN-CONTAINING PROTEIN"/>
    <property type="match status" value="1"/>
</dbReference>
<dbReference type="PANTHER" id="PTHR24376">
    <property type="entry name" value="ZINC FINGER PROTEIN"/>
    <property type="match status" value="1"/>
</dbReference>
<dbReference type="Pfam" id="PF00096">
    <property type="entry name" value="zf-C2H2"/>
    <property type="match status" value="12"/>
</dbReference>
<dbReference type="SMART" id="SM00355">
    <property type="entry name" value="ZnF_C2H2"/>
    <property type="match status" value="15"/>
</dbReference>
<dbReference type="SUPFAM" id="SSF57667">
    <property type="entry name" value="beta-beta-alpha zinc fingers"/>
    <property type="match status" value="9"/>
</dbReference>
<dbReference type="PROSITE" id="PS00028">
    <property type="entry name" value="ZINC_FINGER_C2H2_1"/>
    <property type="match status" value="13"/>
</dbReference>
<dbReference type="PROSITE" id="PS50157">
    <property type="entry name" value="ZINC_FINGER_C2H2_2"/>
    <property type="match status" value="14"/>
</dbReference>
<organism>
    <name type="scientific">Rattus norvegicus</name>
    <name type="common">Rat</name>
    <dbReference type="NCBI Taxonomy" id="10116"/>
    <lineage>
        <taxon>Eukaryota</taxon>
        <taxon>Metazoa</taxon>
        <taxon>Chordata</taxon>
        <taxon>Craniata</taxon>
        <taxon>Vertebrata</taxon>
        <taxon>Euteleostomi</taxon>
        <taxon>Mammalia</taxon>
        <taxon>Eutheria</taxon>
        <taxon>Euarchontoglires</taxon>
        <taxon>Glires</taxon>
        <taxon>Rodentia</taxon>
        <taxon>Myomorpha</taxon>
        <taxon>Muroidea</taxon>
        <taxon>Muridae</taxon>
        <taxon>Murinae</taxon>
        <taxon>Rattus</taxon>
    </lineage>
</organism>
<comment type="function">
    <text evidence="1 2">Sequence-specific double-stranded DNA-binding protein. Binds ATT-rich and T-rich DNA sequences and facilitates DNA bending (By similarity). May regulate the expression of genes involved in cellular fatty acid import, including SCARB1/CD36, and genes involved in lipid droplet formation (By similarity). May regulate the expression of LCN2, and thereby influence iron metabolism and apoptosis-related pathways (By similarity). May regulate the expression of genes involved in glucose transport (By similarity).</text>
</comment>
<comment type="subunit">
    <text evidence="2">Homodimers and homomultimers. Found in a complex with RIP60 and RIP100.</text>
</comment>
<comment type="subcellular location">
    <subcellularLocation>
        <location evidence="1">Nucleus</location>
    </subcellularLocation>
    <subcellularLocation>
        <location evidence="1">Cytoplasm</location>
        <location evidence="1">Cytosol</location>
    </subcellularLocation>
</comment>
<comment type="tissue specificity">
    <text evidence="5">Expressed in the liver and in subcutaneous and visceral adipose tissue.</text>
</comment>
<comment type="caution">
    <text evidence="6">Was believed to function in chromosomal DNA replication initiation, later studies however do not corroborate this theory.</text>
</comment>
<proteinExistence type="evidence at transcript level"/>
<protein>
    <recommendedName>
        <fullName evidence="6">DNA-binding protein REPIN1</fullName>
    </recommendedName>
</protein>